<protein>
    <recommendedName>
        <fullName evidence="1">3-methyl-2-oxobutanoate hydroxymethyltransferase</fullName>
        <ecNumber evidence="1">2.1.2.11</ecNumber>
    </recommendedName>
    <alternativeName>
        <fullName evidence="1">Ketopantoate hydroxymethyltransferase</fullName>
        <shortName evidence="1">KPHMT</shortName>
    </alternativeName>
</protein>
<feature type="chain" id="PRO_0000297294" description="3-methyl-2-oxobutanoate hydroxymethyltransferase">
    <location>
        <begin position="1"/>
        <end position="281"/>
    </location>
</feature>
<feature type="active site" description="Proton acceptor" evidence="1">
    <location>
        <position position="186"/>
    </location>
</feature>
<feature type="binding site" evidence="1">
    <location>
        <begin position="49"/>
        <end position="50"/>
    </location>
    <ligand>
        <name>3-methyl-2-oxobutanoate</name>
        <dbReference type="ChEBI" id="CHEBI:11851"/>
    </ligand>
</feature>
<feature type="binding site" evidence="1">
    <location>
        <position position="49"/>
    </location>
    <ligand>
        <name>Mg(2+)</name>
        <dbReference type="ChEBI" id="CHEBI:18420"/>
    </ligand>
</feature>
<feature type="binding site" evidence="1">
    <location>
        <position position="88"/>
    </location>
    <ligand>
        <name>3-methyl-2-oxobutanoate</name>
        <dbReference type="ChEBI" id="CHEBI:11851"/>
    </ligand>
</feature>
<feature type="binding site" evidence="1">
    <location>
        <position position="88"/>
    </location>
    <ligand>
        <name>Mg(2+)</name>
        <dbReference type="ChEBI" id="CHEBI:18420"/>
    </ligand>
</feature>
<feature type="binding site" evidence="1">
    <location>
        <position position="118"/>
    </location>
    <ligand>
        <name>3-methyl-2-oxobutanoate</name>
        <dbReference type="ChEBI" id="CHEBI:11851"/>
    </ligand>
</feature>
<feature type="binding site" evidence="1">
    <location>
        <position position="120"/>
    </location>
    <ligand>
        <name>Mg(2+)</name>
        <dbReference type="ChEBI" id="CHEBI:18420"/>
    </ligand>
</feature>
<sequence length="281" mass="29783">MSATGGAKSFTPPDIAKAKGKAPIVCLTAYTTPIARLLDPHCDVVLVGDSVGMVMHGLPSTLGVTLDMMIMHGKAVRRGLERALMVVDMPFGSYEEGPEQAFRNAARVMAETGCAAVKLEGGESMAETIRFLTGRGIPVMAHVGLTPQAVNAFGGYQVQGRGEDGDRVMRDAQAVAKAGAFSVVLEKVPEPLARRITKEIPIPTIGIGASPACDGQVLVVDDMLGMFTDFRPKFVKRYAELAEAAEAGIAAYAKDVRQRRFPAPEHVFSDMPKPVKGGEAA</sequence>
<reference key="1">
    <citation type="submission" date="2006-06" db="EMBL/GenBank/DDBJ databases">
        <title>Complete sequence of chromosome of Mesorhizobium sp. BNC1.</title>
        <authorList>
            <consortium name="US DOE Joint Genome Institute"/>
            <person name="Copeland A."/>
            <person name="Lucas S."/>
            <person name="Lapidus A."/>
            <person name="Barry K."/>
            <person name="Detter J.C."/>
            <person name="Glavina del Rio T."/>
            <person name="Hammon N."/>
            <person name="Israni S."/>
            <person name="Dalin E."/>
            <person name="Tice H."/>
            <person name="Pitluck S."/>
            <person name="Chertkov O."/>
            <person name="Brettin T."/>
            <person name="Bruce D."/>
            <person name="Han C."/>
            <person name="Tapia R."/>
            <person name="Gilna P."/>
            <person name="Schmutz J."/>
            <person name="Larimer F."/>
            <person name="Land M."/>
            <person name="Hauser L."/>
            <person name="Kyrpides N."/>
            <person name="Mikhailova N."/>
            <person name="Richardson P."/>
        </authorList>
    </citation>
    <scope>NUCLEOTIDE SEQUENCE [LARGE SCALE GENOMIC DNA]</scope>
    <source>
        <strain>BNC1</strain>
    </source>
</reference>
<proteinExistence type="inferred from homology"/>
<name>PANB_CHESB</name>
<comment type="function">
    <text evidence="1">Catalyzes the reversible reaction in which hydroxymethyl group from 5,10-methylenetetrahydrofolate is transferred onto alpha-ketoisovalerate to form ketopantoate.</text>
</comment>
<comment type="catalytic activity">
    <reaction evidence="1">
        <text>3-methyl-2-oxobutanoate + (6R)-5,10-methylene-5,6,7,8-tetrahydrofolate + H2O = 2-dehydropantoate + (6S)-5,6,7,8-tetrahydrofolate</text>
        <dbReference type="Rhea" id="RHEA:11824"/>
        <dbReference type="ChEBI" id="CHEBI:11561"/>
        <dbReference type="ChEBI" id="CHEBI:11851"/>
        <dbReference type="ChEBI" id="CHEBI:15377"/>
        <dbReference type="ChEBI" id="CHEBI:15636"/>
        <dbReference type="ChEBI" id="CHEBI:57453"/>
        <dbReference type="EC" id="2.1.2.11"/>
    </reaction>
</comment>
<comment type="cofactor">
    <cofactor evidence="1">
        <name>Mg(2+)</name>
        <dbReference type="ChEBI" id="CHEBI:18420"/>
    </cofactor>
    <text evidence="1">Binds 1 Mg(2+) ion per subunit.</text>
</comment>
<comment type="pathway">
    <text evidence="1">Cofactor biosynthesis; (R)-pantothenate biosynthesis; (R)-pantoate from 3-methyl-2-oxobutanoate: step 1/2.</text>
</comment>
<comment type="subunit">
    <text evidence="1">Homodecamer; pentamer of dimers.</text>
</comment>
<comment type="subcellular location">
    <subcellularLocation>
        <location evidence="1">Cytoplasm</location>
    </subcellularLocation>
</comment>
<comment type="similarity">
    <text evidence="1">Belongs to the PanB family.</text>
</comment>
<dbReference type="EC" id="2.1.2.11" evidence="1"/>
<dbReference type="EMBL" id="CP000390">
    <property type="protein sequence ID" value="ABG63943.1"/>
    <property type="molecule type" value="Genomic_DNA"/>
</dbReference>
<dbReference type="SMR" id="Q11F82"/>
<dbReference type="STRING" id="266779.Meso_2559"/>
<dbReference type="KEGG" id="mes:Meso_2559"/>
<dbReference type="eggNOG" id="COG0413">
    <property type="taxonomic scope" value="Bacteria"/>
</dbReference>
<dbReference type="HOGENOM" id="CLU_036645_1_0_5"/>
<dbReference type="OrthoDB" id="9781789at2"/>
<dbReference type="UniPathway" id="UPA00028">
    <property type="reaction ID" value="UER00003"/>
</dbReference>
<dbReference type="GO" id="GO:0005737">
    <property type="term" value="C:cytoplasm"/>
    <property type="evidence" value="ECO:0007669"/>
    <property type="project" value="UniProtKB-SubCell"/>
</dbReference>
<dbReference type="GO" id="GO:0003864">
    <property type="term" value="F:3-methyl-2-oxobutanoate hydroxymethyltransferase activity"/>
    <property type="evidence" value="ECO:0007669"/>
    <property type="project" value="UniProtKB-UniRule"/>
</dbReference>
<dbReference type="GO" id="GO:0000287">
    <property type="term" value="F:magnesium ion binding"/>
    <property type="evidence" value="ECO:0007669"/>
    <property type="project" value="TreeGrafter"/>
</dbReference>
<dbReference type="GO" id="GO:0015940">
    <property type="term" value="P:pantothenate biosynthetic process"/>
    <property type="evidence" value="ECO:0007669"/>
    <property type="project" value="UniProtKB-UniRule"/>
</dbReference>
<dbReference type="CDD" id="cd06557">
    <property type="entry name" value="KPHMT-like"/>
    <property type="match status" value="1"/>
</dbReference>
<dbReference type="FunFam" id="3.20.20.60:FF:000003">
    <property type="entry name" value="3-methyl-2-oxobutanoate hydroxymethyltransferase"/>
    <property type="match status" value="1"/>
</dbReference>
<dbReference type="Gene3D" id="3.20.20.60">
    <property type="entry name" value="Phosphoenolpyruvate-binding domains"/>
    <property type="match status" value="1"/>
</dbReference>
<dbReference type="HAMAP" id="MF_00156">
    <property type="entry name" value="PanB"/>
    <property type="match status" value="1"/>
</dbReference>
<dbReference type="InterPro" id="IPR003700">
    <property type="entry name" value="Pantoate_hydroxy_MeTrfase"/>
</dbReference>
<dbReference type="InterPro" id="IPR015813">
    <property type="entry name" value="Pyrv/PenolPyrv_kinase-like_dom"/>
</dbReference>
<dbReference type="InterPro" id="IPR040442">
    <property type="entry name" value="Pyrv_kinase-like_dom_sf"/>
</dbReference>
<dbReference type="NCBIfam" id="TIGR00222">
    <property type="entry name" value="panB"/>
    <property type="match status" value="1"/>
</dbReference>
<dbReference type="NCBIfam" id="NF001452">
    <property type="entry name" value="PRK00311.1"/>
    <property type="match status" value="1"/>
</dbReference>
<dbReference type="PANTHER" id="PTHR20881">
    <property type="entry name" value="3-METHYL-2-OXOBUTANOATE HYDROXYMETHYLTRANSFERASE"/>
    <property type="match status" value="1"/>
</dbReference>
<dbReference type="PANTHER" id="PTHR20881:SF0">
    <property type="entry name" value="3-METHYL-2-OXOBUTANOATE HYDROXYMETHYLTRANSFERASE"/>
    <property type="match status" value="1"/>
</dbReference>
<dbReference type="Pfam" id="PF02548">
    <property type="entry name" value="Pantoate_transf"/>
    <property type="match status" value="1"/>
</dbReference>
<dbReference type="PIRSF" id="PIRSF000388">
    <property type="entry name" value="Pantoate_hydroxy_MeTrfase"/>
    <property type="match status" value="1"/>
</dbReference>
<dbReference type="SUPFAM" id="SSF51621">
    <property type="entry name" value="Phosphoenolpyruvate/pyruvate domain"/>
    <property type="match status" value="1"/>
</dbReference>
<gene>
    <name evidence="1" type="primary">panB</name>
    <name type="ordered locus">Meso_2559</name>
</gene>
<organism>
    <name type="scientific">Chelativorans sp. (strain BNC1)</name>
    <dbReference type="NCBI Taxonomy" id="266779"/>
    <lineage>
        <taxon>Bacteria</taxon>
        <taxon>Pseudomonadati</taxon>
        <taxon>Pseudomonadota</taxon>
        <taxon>Alphaproteobacteria</taxon>
        <taxon>Hyphomicrobiales</taxon>
        <taxon>Phyllobacteriaceae</taxon>
        <taxon>Chelativorans</taxon>
    </lineage>
</organism>
<evidence type="ECO:0000255" key="1">
    <source>
        <dbReference type="HAMAP-Rule" id="MF_00156"/>
    </source>
</evidence>
<accession>Q11F82</accession>
<keyword id="KW-0963">Cytoplasm</keyword>
<keyword id="KW-0460">Magnesium</keyword>
<keyword id="KW-0479">Metal-binding</keyword>
<keyword id="KW-0566">Pantothenate biosynthesis</keyword>
<keyword id="KW-0808">Transferase</keyword>